<protein>
    <recommendedName>
        <fullName evidence="1">Large ribosomal subunit protein uL2</fullName>
    </recommendedName>
    <alternativeName>
        <fullName evidence="3">50S ribosomal protein L2</fullName>
    </alternativeName>
</protein>
<name>RL2_RIPO1</name>
<dbReference type="EMBL" id="CP001287">
    <property type="protein sequence ID" value="ACK64352.1"/>
    <property type="molecule type" value="Genomic_DNA"/>
</dbReference>
<dbReference type="RefSeq" id="WP_012593629.1">
    <property type="nucleotide sequence ID" value="NC_011726.1"/>
</dbReference>
<dbReference type="SMR" id="B7K332"/>
<dbReference type="STRING" id="41431.PCC8801_0249"/>
<dbReference type="KEGG" id="cyp:PCC8801_0249"/>
<dbReference type="eggNOG" id="COG0090">
    <property type="taxonomic scope" value="Bacteria"/>
</dbReference>
<dbReference type="HOGENOM" id="CLU_036235_2_1_3"/>
<dbReference type="OrthoDB" id="9778722at2"/>
<dbReference type="Proteomes" id="UP000008204">
    <property type="component" value="Chromosome"/>
</dbReference>
<dbReference type="GO" id="GO:0015934">
    <property type="term" value="C:large ribosomal subunit"/>
    <property type="evidence" value="ECO:0007669"/>
    <property type="project" value="InterPro"/>
</dbReference>
<dbReference type="GO" id="GO:0019843">
    <property type="term" value="F:rRNA binding"/>
    <property type="evidence" value="ECO:0007669"/>
    <property type="project" value="UniProtKB-UniRule"/>
</dbReference>
<dbReference type="GO" id="GO:0003735">
    <property type="term" value="F:structural constituent of ribosome"/>
    <property type="evidence" value="ECO:0007669"/>
    <property type="project" value="InterPro"/>
</dbReference>
<dbReference type="GO" id="GO:0016740">
    <property type="term" value="F:transferase activity"/>
    <property type="evidence" value="ECO:0007669"/>
    <property type="project" value="InterPro"/>
</dbReference>
<dbReference type="GO" id="GO:0006412">
    <property type="term" value="P:translation"/>
    <property type="evidence" value="ECO:0007669"/>
    <property type="project" value="UniProtKB-UniRule"/>
</dbReference>
<dbReference type="FunFam" id="2.30.30.30:FF:000001">
    <property type="entry name" value="50S ribosomal protein L2"/>
    <property type="match status" value="1"/>
</dbReference>
<dbReference type="FunFam" id="2.40.50.140:FF:000003">
    <property type="entry name" value="50S ribosomal protein L2"/>
    <property type="match status" value="1"/>
</dbReference>
<dbReference type="FunFam" id="4.10.950.10:FF:000001">
    <property type="entry name" value="50S ribosomal protein L2"/>
    <property type="match status" value="1"/>
</dbReference>
<dbReference type="Gene3D" id="2.30.30.30">
    <property type="match status" value="1"/>
</dbReference>
<dbReference type="Gene3D" id="2.40.50.140">
    <property type="entry name" value="Nucleic acid-binding proteins"/>
    <property type="match status" value="1"/>
</dbReference>
<dbReference type="Gene3D" id="4.10.950.10">
    <property type="entry name" value="Ribosomal protein L2, domain 3"/>
    <property type="match status" value="1"/>
</dbReference>
<dbReference type="HAMAP" id="MF_01320_B">
    <property type="entry name" value="Ribosomal_uL2_B"/>
    <property type="match status" value="1"/>
</dbReference>
<dbReference type="InterPro" id="IPR012340">
    <property type="entry name" value="NA-bd_OB-fold"/>
</dbReference>
<dbReference type="InterPro" id="IPR014722">
    <property type="entry name" value="Rib_uL2_dom2"/>
</dbReference>
<dbReference type="InterPro" id="IPR002171">
    <property type="entry name" value="Ribosomal_uL2"/>
</dbReference>
<dbReference type="InterPro" id="IPR005880">
    <property type="entry name" value="Ribosomal_uL2_bac/org-type"/>
</dbReference>
<dbReference type="InterPro" id="IPR022669">
    <property type="entry name" value="Ribosomal_uL2_C"/>
</dbReference>
<dbReference type="InterPro" id="IPR022671">
    <property type="entry name" value="Ribosomal_uL2_CS"/>
</dbReference>
<dbReference type="InterPro" id="IPR014726">
    <property type="entry name" value="Ribosomal_uL2_dom3"/>
</dbReference>
<dbReference type="InterPro" id="IPR022666">
    <property type="entry name" value="Ribosomal_uL2_RNA-bd_dom"/>
</dbReference>
<dbReference type="InterPro" id="IPR008991">
    <property type="entry name" value="Translation_prot_SH3-like_sf"/>
</dbReference>
<dbReference type="NCBIfam" id="TIGR01171">
    <property type="entry name" value="rplB_bact"/>
    <property type="match status" value="1"/>
</dbReference>
<dbReference type="PANTHER" id="PTHR13691:SF5">
    <property type="entry name" value="LARGE RIBOSOMAL SUBUNIT PROTEIN UL2M"/>
    <property type="match status" value="1"/>
</dbReference>
<dbReference type="PANTHER" id="PTHR13691">
    <property type="entry name" value="RIBOSOMAL PROTEIN L2"/>
    <property type="match status" value="1"/>
</dbReference>
<dbReference type="Pfam" id="PF00181">
    <property type="entry name" value="Ribosomal_L2"/>
    <property type="match status" value="1"/>
</dbReference>
<dbReference type="Pfam" id="PF03947">
    <property type="entry name" value="Ribosomal_L2_C"/>
    <property type="match status" value="1"/>
</dbReference>
<dbReference type="PIRSF" id="PIRSF002158">
    <property type="entry name" value="Ribosomal_L2"/>
    <property type="match status" value="1"/>
</dbReference>
<dbReference type="SMART" id="SM01383">
    <property type="entry name" value="Ribosomal_L2"/>
    <property type="match status" value="1"/>
</dbReference>
<dbReference type="SMART" id="SM01382">
    <property type="entry name" value="Ribosomal_L2_C"/>
    <property type="match status" value="1"/>
</dbReference>
<dbReference type="SUPFAM" id="SSF50249">
    <property type="entry name" value="Nucleic acid-binding proteins"/>
    <property type="match status" value="1"/>
</dbReference>
<dbReference type="SUPFAM" id="SSF50104">
    <property type="entry name" value="Translation proteins SH3-like domain"/>
    <property type="match status" value="1"/>
</dbReference>
<dbReference type="PROSITE" id="PS00467">
    <property type="entry name" value="RIBOSOMAL_L2"/>
    <property type="match status" value="1"/>
</dbReference>
<feature type="chain" id="PRO_1000141535" description="Large ribosomal subunit protein uL2">
    <location>
        <begin position="1"/>
        <end position="276"/>
    </location>
</feature>
<feature type="region of interest" description="Disordered" evidence="2">
    <location>
        <begin position="29"/>
        <end position="55"/>
    </location>
</feature>
<feature type="region of interest" description="Disordered" evidence="2">
    <location>
        <begin position="219"/>
        <end position="276"/>
    </location>
</feature>
<feature type="compositionally biased region" description="Basic residues" evidence="2">
    <location>
        <begin position="259"/>
        <end position="276"/>
    </location>
</feature>
<reference key="1">
    <citation type="journal article" date="2011" name="MBio">
        <title>Novel metabolic attributes of the genus Cyanothece, comprising a group of unicellular nitrogen-fixing Cyanobacteria.</title>
        <authorList>
            <person name="Bandyopadhyay A."/>
            <person name="Elvitigala T."/>
            <person name="Welsh E."/>
            <person name="Stockel J."/>
            <person name="Liberton M."/>
            <person name="Min H."/>
            <person name="Sherman L.A."/>
            <person name="Pakrasi H.B."/>
        </authorList>
    </citation>
    <scope>NUCLEOTIDE SEQUENCE [LARGE SCALE GENOMIC DNA]</scope>
    <source>
        <strain>PCC 8801 / RF-1</strain>
    </source>
</reference>
<evidence type="ECO:0000255" key="1">
    <source>
        <dbReference type="HAMAP-Rule" id="MF_01320"/>
    </source>
</evidence>
<evidence type="ECO:0000256" key="2">
    <source>
        <dbReference type="SAM" id="MobiDB-lite"/>
    </source>
</evidence>
<evidence type="ECO:0000305" key="3"/>
<organism>
    <name type="scientific">Rippkaea orientalis (strain PCC 8801 / RF-1)</name>
    <name type="common">Cyanothece sp. (strain PCC 8801)</name>
    <dbReference type="NCBI Taxonomy" id="41431"/>
    <lineage>
        <taxon>Bacteria</taxon>
        <taxon>Bacillati</taxon>
        <taxon>Cyanobacteriota</taxon>
        <taxon>Cyanophyceae</taxon>
        <taxon>Oscillatoriophycideae</taxon>
        <taxon>Chroococcales</taxon>
        <taxon>Aphanothecaceae</taxon>
        <taxon>Rippkaea</taxon>
        <taxon>Rippkaea orientalis</taxon>
    </lineage>
</organism>
<sequence length="276" mass="30376">MGIRSYRPYTPGTREASVSDFAEITKTEPEKSLTTYKHSRQGRNNRGVITSRHRGGGHKRLYRIVDFRRDKHNIPAKVAAIEYDPNRNARIALLFYKDGEKRYILAPAGITVGTMVVSGENAPFEVGNALPLARIPLGTDVHNIELTPGKGGQMVRAAGGSAQVVAKEGDYVTLRLPSKEVRMVRKECYATIGRVGNVEDRNIKLGKAGRTRHLGQRPHVRGSVMNPVDHPHGGGEGRAPIGRSGPVTPWGKPALGAKTRNKKKQSSKLIVRRRTR</sequence>
<keyword id="KW-1185">Reference proteome</keyword>
<keyword id="KW-0687">Ribonucleoprotein</keyword>
<keyword id="KW-0689">Ribosomal protein</keyword>
<keyword id="KW-0694">RNA-binding</keyword>
<keyword id="KW-0699">rRNA-binding</keyword>
<accession>B7K332</accession>
<comment type="function">
    <text evidence="1">One of the primary rRNA binding proteins. Required for association of the 30S and 50S subunits to form the 70S ribosome, for tRNA binding and peptide bond formation. It has been suggested to have peptidyltransferase activity; this is somewhat controversial. Makes several contacts with the 16S rRNA in the 70S ribosome.</text>
</comment>
<comment type="subunit">
    <text evidence="1">Part of the 50S ribosomal subunit. Forms a bridge to the 30S subunit in the 70S ribosome.</text>
</comment>
<comment type="similarity">
    <text evidence="1">Belongs to the universal ribosomal protein uL2 family.</text>
</comment>
<proteinExistence type="inferred from homology"/>
<gene>
    <name evidence="1" type="primary">rplB</name>
    <name evidence="1" type="synonym">rpl2</name>
    <name type="ordered locus">PCC8801_0249</name>
</gene>